<organism>
    <name type="scientific">Priestia megaterium (strain DSM 319 / IMG 1521)</name>
    <name type="common">Bacillus megaterium</name>
    <dbReference type="NCBI Taxonomy" id="592022"/>
    <lineage>
        <taxon>Bacteria</taxon>
        <taxon>Bacillati</taxon>
        <taxon>Bacillota</taxon>
        <taxon>Bacilli</taxon>
        <taxon>Bacillales</taxon>
        <taxon>Bacillaceae</taxon>
        <taxon>Priestia</taxon>
    </lineage>
</organism>
<feature type="chain" id="PRO_0000057659" description="Beta-galactosidase">
    <location>
        <begin position="1"/>
        <end position="1034"/>
    </location>
</feature>
<feature type="active site" description="Proton donor" evidence="1">
    <location>
        <position position="481"/>
    </location>
</feature>
<feature type="active site" description="Nucleophile" evidence="1">
    <location>
        <position position="547"/>
    </location>
</feature>
<proteinExistence type="inferred from homology"/>
<dbReference type="EC" id="3.2.1.23"/>
<dbReference type="EMBL" id="AJ000733">
    <property type="protein sequence ID" value="CAA04267.1"/>
    <property type="molecule type" value="Genomic_DNA"/>
</dbReference>
<dbReference type="EMBL" id="CP001982">
    <property type="protein sequence ID" value="ADF38979.1"/>
    <property type="molecule type" value="Genomic_DNA"/>
</dbReference>
<dbReference type="PIR" id="T30574">
    <property type="entry name" value="T30574"/>
</dbReference>
<dbReference type="RefSeq" id="WP_013082993.1">
    <property type="nucleotide sequence ID" value="NC_014103.1"/>
</dbReference>
<dbReference type="SMR" id="O52847"/>
<dbReference type="CAZy" id="GH2">
    <property type="family name" value="Glycoside Hydrolase Family 2"/>
</dbReference>
<dbReference type="KEGG" id="bmd:BMD_2126"/>
<dbReference type="PATRIC" id="fig|592022.4.peg.2076"/>
<dbReference type="HOGENOM" id="CLU_002346_0_2_9"/>
<dbReference type="Proteomes" id="UP000002365">
    <property type="component" value="Chromosome"/>
</dbReference>
<dbReference type="GO" id="GO:0009341">
    <property type="term" value="C:beta-galactosidase complex"/>
    <property type="evidence" value="ECO:0007669"/>
    <property type="project" value="InterPro"/>
</dbReference>
<dbReference type="GO" id="GO:0004565">
    <property type="term" value="F:beta-galactosidase activity"/>
    <property type="evidence" value="ECO:0007669"/>
    <property type="project" value="UniProtKB-EC"/>
</dbReference>
<dbReference type="GO" id="GO:0030246">
    <property type="term" value="F:carbohydrate binding"/>
    <property type="evidence" value="ECO:0007669"/>
    <property type="project" value="InterPro"/>
</dbReference>
<dbReference type="GO" id="GO:0005990">
    <property type="term" value="P:lactose catabolic process"/>
    <property type="evidence" value="ECO:0007669"/>
    <property type="project" value="TreeGrafter"/>
</dbReference>
<dbReference type="FunFam" id="2.60.40.10:FF:000680">
    <property type="entry name" value="Beta-galactosidase"/>
    <property type="match status" value="1"/>
</dbReference>
<dbReference type="FunFam" id="3.20.20.80:FF:000018">
    <property type="entry name" value="Beta-galactosidase"/>
    <property type="match status" value="1"/>
</dbReference>
<dbReference type="Gene3D" id="2.70.98.10">
    <property type="match status" value="1"/>
</dbReference>
<dbReference type="Gene3D" id="2.60.120.260">
    <property type="entry name" value="Galactose-binding domain-like"/>
    <property type="match status" value="1"/>
</dbReference>
<dbReference type="Gene3D" id="3.20.20.80">
    <property type="entry name" value="Glycosidases"/>
    <property type="match status" value="1"/>
</dbReference>
<dbReference type="Gene3D" id="2.60.40.10">
    <property type="entry name" value="Immunoglobulins"/>
    <property type="match status" value="2"/>
</dbReference>
<dbReference type="InterPro" id="IPR004199">
    <property type="entry name" value="B-gal_small/dom_5"/>
</dbReference>
<dbReference type="InterPro" id="IPR050347">
    <property type="entry name" value="Bact_Beta-galactosidase"/>
</dbReference>
<dbReference type="InterPro" id="IPR036156">
    <property type="entry name" value="Beta-gal/glucu_dom_sf"/>
</dbReference>
<dbReference type="InterPro" id="IPR011013">
    <property type="entry name" value="Gal_mutarotase_sf_dom"/>
</dbReference>
<dbReference type="InterPro" id="IPR008979">
    <property type="entry name" value="Galactose-bd-like_sf"/>
</dbReference>
<dbReference type="InterPro" id="IPR014718">
    <property type="entry name" value="GH-type_carb-bd"/>
</dbReference>
<dbReference type="InterPro" id="IPR006101">
    <property type="entry name" value="Glyco_hydro_2"/>
</dbReference>
<dbReference type="InterPro" id="IPR023232">
    <property type="entry name" value="Glyco_hydro_2_AS"/>
</dbReference>
<dbReference type="InterPro" id="IPR006103">
    <property type="entry name" value="Glyco_hydro_2_cat"/>
</dbReference>
<dbReference type="InterPro" id="IPR023230">
    <property type="entry name" value="Glyco_hydro_2_CS"/>
</dbReference>
<dbReference type="InterPro" id="IPR006102">
    <property type="entry name" value="Glyco_hydro_2_Ig-like"/>
</dbReference>
<dbReference type="InterPro" id="IPR006104">
    <property type="entry name" value="Glyco_hydro_2_N"/>
</dbReference>
<dbReference type="InterPro" id="IPR017853">
    <property type="entry name" value="Glycoside_hydrolase_SF"/>
</dbReference>
<dbReference type="InterPro" id="IPR013783">
    <property type="entry name" value="Ig-like_fold"/>
</dbReference>
<dbReference type="InterPro" id="IPR032312">
    <property type="entry name" value="LacZ_4"/>
</dbReference>
<dbReference type="PANTHER" id="PTHR46323">
    <property type="entry name" value="BETA-GALACTOSIDASE"/>
    <property type="match status" value="1"/>
</dbReference>
<dbReference type="PANTHER" id="PTHR46323:SF2">
    <property type="entry name" value="BETA-GALACTOSIDASE"/>
    <property type="match status" value="1"/>
</dbReference>
<dbReference type="Pfam" id="PF02929">
    <property type="entry name" value="Bgal_small_N"/>
    <property type="match status" value="1"/>
</dbReference>
<dbReference type="Pfam" id="PF00703">
    <property type="entry name" value="Glyco_hydro_2"/>
    <property type="match status" value="1"/>
</dbReference>
<dbReference type="Pfam" id="PF02836">
    <property type="entry name" value="Glyco_hydro_2_C"/>
    <property type="match status" value="1"/>
</dbReference>
<dbReference type="Pfam" id="PF02837">
    <property type="entry name" value="Glyco_hydro_2_N"/>
    <property type="match status" value="1"/>
</dbReference>
<dbReference type="Pfam" id="PF16353">
    <property type="entry name" value="LacZ_4"/>
    <property type="match status" value="1"/>
</dbReference>
<dbReference type="PRINTS" id="PR00132">
    <property type="entry name" value="GLHYDRLASE2"/>
</dbReference>
<dbReference type="SMART" id="SM01038">
    <property type="entry name" value="Bgal_small_N"/>
    <property type="match status" value="1"/>
</dbReference>
<dbReference type="SUPFAM" id="SSF51445">
    <property type="entry name" value="(Trans)glycosidases"/>
    <property type="match status" value="1"/>
</dbReference>
<dbReference type="SUPFAM" id="SSF49303">
    <property type="entry name" value="beta-Galactosidase/glucuronidase domain"/>
    <property type="match status" value="2"/>
</dbReference>
<dbReference type="SUPFAM" id="SSF74650">
    <property type="entry name" value="Galactose mutarotase-like"/>
    <property type="match status" value="1"/>
</dbReference>
<dbReference type="SUPFAM" id="SSF49785">
    <property type="entry name" value="Galactose-binding domain-like"/>
    <property type="match status" value="1"/>
</dbReference>
<dbReference type="PROSITE" id="PS00719">
    <property type="entry name" value="GLYCOSYL_HYDROL_F2_1"/>
    <property type="match status" value="1"/>
</dbReference>
<dbReference type="PROSITE" id="PS00608">
    <property type="entry name" value="GLYCOSYL_HYDROL_F2_2"/>
    <property type="match status" value="1"/>
</dbReference>
<reference key="1">
    <citation type="submission" date="1997-09" db="EMBL/GenBank/DDBJ databases">
        <authorList>
            <person name="Strey J."/>
        </authorList>
    </citation>
    <scope>NUCLEOTIDE SEQUENCE [GENOMIC DNA]</scope>
</reference>
<reference key="2">
    <citation type="journal article" date="2011" name="J. Bacteriol.">
        <title>Genome sequences of the biotechnologically important Bacillus megaterium strains QM B1551 and DSM319.</title>
        <authorList>
            <person name="Eppinger M."/>
            <person name="Bunk B."/>
            <person name="Johns M.A."/>
            <person name="Edirisinghe J.N."/>
            <person name="Kutumbaka K.K."/>
            <person name="Koenig S.S."/>
            <person name="Creasy H.H."/>
            <person name="Rosovitz M.J."/>
            <person name="Riley D.R."/>
            <person name="Daugherty S."/>
            <person name="Martin M."/>
            <person name="Elbourne L.D."/>
            <person name="Paulsen I."/>
            <person name="Biedendieck R."/>
            <person name="Braun C."/>
            <person name="Grayburn S."/>
            <person name="Dhingra S."/>
            <person name="Lukyanchuk V."/>
            <person name="Ball B."/>
            <person name="Ul-Qamar R."/>
            <person name="Seibel J."/>
            <person name="Bremer E."/>
            <person name="Jahn D."/>
            <person name="Ravel J."/>
            <person name="Vary P.S."/>
        </authorList>
    </citation>
    <scope>NUCLEOTIDE SEQUENCE [LARGE SCALE GENOMIC DNA]</scope>
    <source>
        <strain>DSM 319 / IMG 1521</strain>
    </source>
</reference>
<keyword id="KW-0326">Glycosidase</keyword>
<keyword id="KW-0378">Hydrolase</keyword>
<accession>O52847</accession>
<accession>D5DFH9</accession>
<sequence length="1034" mass="118674">MLKTGKKFHYTAPANGYPEWNNNPEIFQLNRSKAHALLMPYQTVEEALKNDRKSSVYYQSLNGSWYFHFAENADGRVKNFFAPEFSYEKWDSISVPSHWQLQGYDYPQYTNVTYPWVENEELEPPFAPTKYNPVGQYVRTFTPKSEWKDQPVYISFQGVESAFYVWINGEFVGYSEDSFTPAEFDITSYLQEGENTIAVEVYRWSDASWLEDQDFWRMSGIFRDVYLYSTPQVHIYDFSVRSSLDNNYEDGELSVSADILNYFEHDTQDLTFEVMLYDANAQEVLQAPLQTNLSVSDQRTVSLRTHIKSPAKWSAESPNLYTLVLSLKNAAGSIIETESCKVGFRTFEIKNGLMTINGKRIVLRGVNRHEFDSVKGRAGITREDMIHDILLMKQHNINAVRTSHYPNDSVWYELCNEYGLYVIDETNLETHGTWTYLQEGEQKAVPGSKPEWKENVLDRCRSMYERDKNHPSIIIWSLGNESFGGENFQHMYTFFKEKDSTRLVHYEGIFHHRDYDASDIESTMYVKPADVERYALMNPKKPYILCEYSHAMGNSCGNLYKYWELFDQYPILQGGFIWDWKDQALQATAEDGTSYLAYGGDFGDTPNDGNFCGNGLIFADGTASPKIAEVKKCYQPVKWTAVDPAKGKFAVQNKHLFTNLNAYDFVWTVEKNGELVEKHASLLNVAPDGTDELTLSYPLYEQENETDEFVLTLSLRLSKDTAWASAGYEVAYEQFVLPAKAAMPSVKAAHPALTVDQNEQTLTVTGTNFTAIFDKRKGQFISYNYERTELLASGFRPNFWRAVTDNDLGNKLHERCQTWRQASLEQHVKKVTVQPQVDFVIISVELALDNSLASCYVTYTLYNDGEMKIEQSLAPSETMPEIPEIGMLFTMNAAFDSLTWYGRGPHENYWDRKTGAKLALHKGSVKEQVTPYLRPQECGNKTDVRWATITNDQGRGFLIKGLPTVELNALPYSPFELEAYDHFYKLPASDSVTVRVNYKQMGVGGDDSWQAKTHPNYTLYANRSYTNTFTLKPL</sequence>
<protein>
    <recommendedName>
        <fullName>Beta-galactosidase</fullName>
        <shortName>Beta-gal</shortName>
        <ecNumber>3.2.1.23</ecNumber>
    </recommendedName>
    <alternativeName>
        <fullName>Lactase</fullName>
    </alternativeName>
</protein>
<evidence type="ECO:0000250" key="1"/>
<evidence type="ECO:0000305" key="2"/>
<name>BGAL_PRIM3</name>
<gene>
    <name type="primary">bgaM</name>
    <name type="ordered locus">BMD_2126</name>
</gene>
<comment type="catalytic activity">
    <reaction>
        <text>Hydrolysis of terminal non-reducing beta-D-galactose residues in beta-D-galactosides.</text>
        <dbReference type="EC" id="3.2.1.23"/>
    </reaction>
</comment>
<comment type="similarity">
    <text evidence="2">Belongs to the glycosyl hydrolase 2 family.</text>
</comment>